<organism>
    <name type="scientific">Neisseria meningitidis serogroup A / serotype 4A (strain DSM 15465 / Z2491)</name>
    <dbReference type="NCBI Taxonomy" id="122587"/>
    <lineage>
        <taxon>Bacteria</taxon>
        <taxon>Pseudomonadati</taxon>
        <taxon>Pseudomonadota</taxon>
        <taxon>Betaproteobacteria</taxon>
        <taxon>Neisseriales</taxon>
        <taxon>Neisseriaceae</taxon>
        <taxon>Neisseria</taxon>
    </lineage>
</organism>
<dbReference type="EC" id="2.3.1.46" evidence="1"/>
<dbReference type="EMBL" id="AL157959">
    <property type="protein sequence ID" value="CAM08342.1"/>
    <property type="molecule type" value="Genomic_DNA"/>
</dbReference>
<dbReference type="PIR" id="C81880">
    <property type="entry name" value="C81880"/>
</dbReference>
<dbReference type="SMR" id="Q9JUT9"/>
<dbReference type="ESTHER" id="neima-metx">
    <property type="family name" value="Homoserine_transacetylase"/>
</dbReference>
<dbReference type="EnsemblBacteria" id="CAM08342">
    <property type="protein sequence ID" value="CAM08342"/>
    <property type="gene ID" value="NMA1136"/>
</dbReference>
<dbReference type="KEGG" id="nma:NMA1136"/>
<dbReference type="HOGENOM" id="CLU_028760_1_2_4"/>
<dbReference type="UniPathway" id="UPA00051">
    <property type="reaction ID" value="UER00075"/>
</dbReference>
<dbReference type="Proteomes" id="UP000000626">
    <property type="component" value="Chromosome"/>
</dbReference>
<dbReference type="GO" id="GO:0005737">
    <property type="term" value="C:cytoplasm"/>
    <property type="evidence" value="ECO:0007669"/>
    <property type="project" value="UniProtKB-SubCell"/>
</dbReference>
<dbReference type="GO" id="GO:0004414">
    <property type="term" value="F:homoserine O-acetyltransferase activity"/>
    <property type="evidence" value="ECO:0007669"/>
    <property type="project" value="TreeGrafter"/>
</dbReference>
<dbReference type="GO" id="GO:0008899">
    <property type="term" value="F:homoserine O-succinyltransferase activity"/>
    <property type="evidence" value="ECO:0007669"/>
    <property type="project" value="UniProtKB-UniRule"/>
</dbReference>
<dbReference type="GO" id="GO:0009092">
    <property type="term" value="P:homoserine metabolic process"/>
    <property type="evidence" value="ECO:0007669"/>
    <property type="project" value="TreeGrafter"/>
</dbReference>
<dbReference type="GO" id="GO:0009086">
    <property type="term" value="P:methionine biosynthetic process"/>
    <property type="evidence" value="ECO:0007669"/>
    <property type="project" value="UniProtKB-UniRule"/>
</dbReference>
<dbReference type="FunFam" id="1.10.1740.110:FF:000001">
    <property type="entry name" value="Homoserine O-acetyltransferase"/>
    <property type="match status" value="1"/>
</dbReference>
<dbReference type="Gene3D" id="1.10.1740.110">
    <property type="match status" value="1"/>
</dbReference>
<dbReference type="Gene3D" id="3.40.50.1820">
    <property type="entry name" value="alpha/beta hydrolase"/>
    <property type="match status" value="1"/>
</dbReference>
<dbReference type="HAMAP" id="MF_00296">
    <property type="entry name" value="MetX_acyltransf"/>
    <property type="match status" value="1"/>
</dbReference>
<dbReference type="InterPro" id="IPR000073">
    <property type="entry name" value="AB_hydrolase_1"/>
</dbReference>
<dbReference type="InterPro" id="IPR029058">
    <property type="entry name" value="AB_hydrolase_fold"/>
</dbReference>
<dbReference type="InterPro" id="IPR008220">
    <property type="entry name" value="HAT_MetX-like"/>
</dbReference>
<dbReference type="NCBIfam" id="TIGR01392">
    <property type="entry name" value="homoserO_Ac_trn"/>
    <property type="match status" value="1"/>
</dbReference>
<dbReference type="NCBIfam" id="NF001209">
    <property type="entry name" value="PRK00175.1"/>
    <property type="match status" value="1"/>
</dbReference>
<dbReference type="PANTHER" id="PTHR32268">
    <property type="entry name" value="HOMOSERINE O-ACETYLTRANSFERASE"/>
    <property type="match status" value="1"/>
</dbReference>
<dbReference type="PANTHER" id="PTHR32268:SF11">
    <property type="entry name" value="HOMOSERINE O-ACETYLTRANSFERASE"/>
    <property type="match status" value="1"/>
</dbReference>
<dbReference type="Pfam" id="PF00561">
    <property type="entry name" value="Abhydrolase_1"/>
    <property type="match status" value="1"/>
</dbReference>
<dbReference type="PIRSF" id="PIRSF000443">
    <property type="entry name" value="Homoser_Ac_trans"/>
    <property type="match status" value="1"/>
</dbReference>
<dbReference type="SUPFAM" id="SSF53474">
    <property type="entry name" value="alpha/beta-Hydrolases"/>
    <property type="match status" value="1"/>
</dbReference>
<evidence type="ECO:0000255" key="1">
    <source>
        <dbReference type="HAMAP-Rule" id="MF_00296"/>
    </source>
</evidence>
<sequence length="379" mass="42109">MSQNASVGIVTPQKIPFEMPLVLENGKTLPRFDLMIETYGELNAEKNNAVLICHALSGNHHVAGRHSAEDKYTGWWDNMVGPGKPIDTERFFVVGLNNLGGCDGSSGPLSINPETGREYGADFPVVTVKDWVKSQAALTDYLGIGQWAAVVGGSLGGMQALQWTISYPERVRHALVIASAPKLSTQNIAFNDVARQAILTDPDFNEGHYRSRNTVPARGLRIARMMGHITYLAEDGLGKKFGRDLRSNGYQYGYGVEFEVESYLRYQGDKFVGRFDANTYLLMTKALDYFDPAADFGNSLTRAVQDVQAKFFVASFSTDWRFAPERSHELVKALIAAQKSVQYIEVKSAHGHDAFLMEDEAYMRAVAAYMNNVYKECQQ</sequence>
<name>METXS_NEIMA</name>
<keyword id="KW-0012">Acyltransferase</keyword>
<keyword id="KW-0028">Amino-acid biosynthesis</keyword>
<keyword id="KW-0963">Cytoplasm</keyword>
<keyword id="KW-0486">Methionine biosynthesis</keyword>
<keyword id="KW-0808">Transferase</keyword>
<proteinExistence type="inferred from homology"/>
<feature type="chain" id="PRO_0000155732" description="Homoserine O-succinyltransferase">
    <location>
        <begin position="1"/>
        <end position="379"/>
    </location>
</feature>
<feature type="domain" description="AB hydrolase-1" evidence="1">
    <location>
        <begin position="48"/>
        <end position="357"/>
    </location>
</feature>
<feature type="active site" description="Nucleophile" evidence="1">
    <location>
        <position position="154"/>
    </location>
</feature>
<feature type="active site" evidence="1">
    <location>
        <position position="319"/>
    </location>
</feature>
<feature type="active site" evidence="1">
    <location>
        <position position="352"/>
    </location>
</feature>
<feature type="binding site" evidence="1">
    <location>
        <position position="224"/>
    </location>
    <ligand>
        <name>substrate</name>
    </ligand>
</feature>
<feature type="binding site" evidence="1">
    <location>
        <position position="353"/>
    </location>
    <ligand>
        <name>substrate</name>
    </ligand>
</feature>
<feature type="site" description="Important for acyl-CoA specificity" evidence="1">
    <location>
        <position position="321"/>
    </location>
</feature>
<accession>Q9JUT9</accession>
<accession>A1IRF6</accession>
<protein>
    <recommendedName>
        <fullName evidence="1">Homoserine O-succinyltransferase</fullName>
        <shortName evidence="1">HST</shortName>
        <ecNumber evidence="1">2.3.1.46</ecNumber>
    </recommendedName>
    <alternativeName>
        <fullName evidence="1">Homoserine transsuccinylase</fullName>
        <shortName evidence="1">HTS</shortName>
    </alternativeName>
</protein>
<comment type="function">
    <text evidence="1">Transfers a succinyl group from succinyl-CoA to L-homoserine, forming succinyl-L-homoserine.</text>
</comment>
<comment type="catalytic activity">
    <reaction evidence="1">
        <text>L-homoserine + succinyl-CoA = O-succinyl-L-homoserine + CoA</text>
        <dbReference type="Rhea" id="RHEA:22008"/>
        <dbReference type="ChEBI" id="CHEBI:57287"/>
        <dbReference type="ChEBI" id="CHEBI:57292"/>
        <dbReference type="ChEBI" id="CHEBI:57476"/>
        <dbReference type="ChEBI" id="CHEBI:57661"/>
        <dbReference type="EC" id="2.3.1.46"/>
    </reaction>
</comment>
<comment type="pathway">
    <text evidence="1">Amino-acid biosynthesis; L-methionine biosynthesis via de novo pathway; O-succinyl-L-homoserine from L-homoserine: step 1/1.</text>
</comment>
<comment type="subunit">
    <text evidence="1">Homodimer.</text>
</comment>
<comment type="subcellular location">
    <subcellularLocation>
        <location evidence="1">Cytoplasm</location>
    </subcellularLocation>
</comment>
<comment type="similarity">
    <text evidence="1">Belongs to the AB hydrolase superfamily. MetX family.</text>
</comment>
<gene>
    <name evidence="1" type="primary">metXS</name>
    <name type="ordered locus">NMA1136</name>
</gene>
<reference key="1">
    <citation type="journal article" date="2000" name="Nature">
        <title>Complete DNA sequence of a serogroup A strain of Neisseria meningitidis Z2491.</title>
        <authorList>
            <person name="Parkhill J."/>
            <person name="Achtman M."/>
            <person name="James K.D."/>
            <person name="Bentley S.D."/>
            <person name="Churcher C.M."/>
            <person name="Klee S.R."/>
            <person name="Morelli G."/>
            <person name="Basham D."/>
            <person name="Brown D."/>
            <person name="Chillingworth T."/>
            <person name="Davies R.M."/>
            <person name="Davis P."/>
            <person name="Devlin K."/>
            <person name="Feltwell T."/>
            <person name="Hamlin N."/>
            <person name="Holroyd S."/>
            <person name="Jagels K."/>
            <person name="Leather S."/>
            <person name="Moule S."/>
            <person name="Mungall K.L."/>
            <person name="Quail M.A."/>
            <person name="Rajandream M.A."/>
            <person name="Rutherford K.M."/>
            <person name="Simmonds M."/>
            <person name="Skelton J."/>
            <person name="Whitehead S."/>
            <person name="Spratt B.G."/>
            <person name="Barrell B.G."/>
        </authorList>
    </citation>
    <scope>NUCLEOTIDE SEQUENCE [LARGE SCALE GENOMIC DNA]</scope>
    <source>
        <strain>DSM 15465 / Z2491</strain>
    </source>
</reference>